<proteinExistence type="inferred from homology"/>
<sequence length="191" mass="21114">MRKIILASGSPRRKELLELASVPFEIIVSEVEETIGAYSSPSDIVMSLALQKASAVAEYNSDHIVLGADTIVTYESRILGKPSNEAEAKEMLQLLSGKTHEVYTGVAIIAKDKTVTFYERTEVTFWELTEEEIDAYIASKEPLDKAGSYGIQGKGSIFVQHIQGDYYSVVGLPISRLVRELKQFNIDVTHA</sequence>
<dbReference type="EC" id="3.6.1.9" evidence="1"/>
<dbReference type="EMBL" id="CP001177">
    <property type="protein sequence ID" value="ACJ81828.1"/>
    <property type="molecule type" value="Genomic_DNA"/>
</dbReference>
<dbReference type="SMR" id="B7HQL2"/>
<dbReference type="KEGG" id="bcr:BCAH187_A4588"/>
<dbReference type="HOGENOM" id="CLU_040416_0_0_9"/>
<dbReference type="Proteomes" id="UP000002214">
    <property type="component" value="Chromosome"/>
</dbReference>
<dbReference type="GO" id="GO:0005737">
    <property type="term" value="C:cytoplasm"/>
    <property type="evidence" value="ECO:0007669"/>
    <property type="project" value="UniProtKB-SubCell"/>
</dbReference>
<dbReference type="GO" id="GO:0036218">
    <property type="term" value="F:dTTP diphosphatase activity"/>
    <property type="evidence" value="ECO:0007669"/>
    <property type="project" value="RHEA"/>
</dbReference>
<dbReference type="GO" id="GO:0036221">
    <property type="term" value="F:UTP diphosphatase activity"/>
    <property type="evidence" value="ECO:0007669"/>
    <property type="project" value="RHEA"/>
</dbReference>
<dbReference type="GO" id="GO:0009117">
    <property type="term" value="P:nucleotide metabolic process"/>
    <property type="evidence" value="ECO:0007669"/>
    <property type="project" value="UniProtKB-KW"/>
</dbReference>
<dbReference type="CDD" id="cd00555">
    <property type="entry name" value="Maf"/>
    <property type="match status" value="1"/>
</dbReference>
<dbReference type="FunFam" id="3.90.950.10:FF:000007">
    <property type="entry name" value="dTTP/UTP pyrophosphatase"/>
    <property type="match status" value="1"/>
</dbReference>
<dbReference type="Gene3D" id="3.90.950.10">
    <property type="match status" value="1"/>
</dbReference>
<dbReference type="HAMAP" id="MF_00528">
    <property type="entry name" value="Maf"/>
    <property type="match status" value="1"/>
</dbReference>
<dbReference type="InterPro" id="IPR029001">
    <property type="entry name" value="ITPase-like_fam"/>
</dbReference>
<dbReference type="InterPro" id="IPR003697">
    <property type="entry name" value="Maf-like"/>
</dbReference>
<dbReference type="NCBIfam" id="TIGR00172">
    <property type="entry name" value="maf"/>
    <property type="match status" value="1"/>
</dbReference>
<dbReference type="PANTHER" id="PTHR43213">
    <property type="entry name" value="BIFUNCTIONAL DTTP/UTP PYROPHOSPHATASE/METHYLTRANSFERASE PROTEIN-RELATED"/>
    <property type="match status" value="1"/>
</dbReference>
<dbReference type="PANTHER" id="PTHR43213:SF5">
    <property type="entry name" value="BIFUNCTIONAL DTTP_UTP PYROPHOSPHATASE_METHYLTRANSFERASE PROTEIN-RELATED"/>
    <property type="match status" value="1"/>
</dbReference>
<dbReference type="Pfam" id="PF02545">
    <property type="entry name" value="Maf"/>
    <property type="match status" value="1"/>
</dbReference>
<dbReference type="PIRSF" id="PIRSF006305">
    <property type="entry name" value="Maf"/>
    <property type="match status" value="1"/>
</dbReference>
<dbReference type="SUPFAM" id="SSF52972">
    <property type="entry name" value="ITPase-like"/>
    <property type="match status" value="1"/>
</dbReference>
<keyword id="KW-0963">Cytoplasm</keyword>
<keyword id="KW-0378">Hydrolase</keyword>
<keyword id="KW-0546">Nucleotide metabolism</keyword>
<organism>
    <name type="scientific">Bacillus cereus (strain AH187)</name>
    <dbReference type="NCBI Taxonomy" id="405534"/>
    <lineage>
        <taxon>Bacteria</taxon>
        <taxon>Bacillati</taxon>
        <taxon>Bacillota</taxon>
        <taxon>Bacilli</taxon>
        <taxon>Bacillales</taxon>
        <taxon>Bacillaceae</taxon>
        <taxon>Bacillus</taxon>
        <taxon>Bacillus cereus group</taxon>
    </lineage>
</organism>
<accession>B7HQL2</accession>
<reference key="1">
    <citation type="submission" date="2008-10" db="EMBL/GenBank/DDBJ databases">
        <title>Genome sequence of Bacillus cereus AH187.</title>
        <authorList>
            <person name="Dodson R.J."/>
            <person name="Durkin A.S."/>
            <person name="Rosovitz M.J."/>
            <person name="Rasko D.A."/>
            <person name="Kolsto A.B."/>
            <person name="Okstad O.A."/>
            <person name="Ravel J."/>
            <person name="Sutton G."/>
        </authorList>
    </citation>
    <scope>NUCLEOTIDE SEQUENCE [LARGE SCALE GENOMIC DNA]</scope>
    <source>
        <strain>AH187</strain>
    </source>
</reference>
<protein>
    <recommendedName>
        <fullName evidence="1">dTTP/UTP pyrophosphatase</fullName>
        <shortName evidence="1">dTTPase/UTPase</shortName>
        <ecNumber evidence="1">3.6.1.9</ecNumber>
    </recommendedName>
    <alternativeName>
        <fullName evidence="1">Nucleoside triphosphate pyrophosphatase</fullName>
    </alternativeName>
    <alternativeName>
        <fullName evidence="1">Nucleotide pyrophosphatase</fullName>
        <shortName evidence="1">Nucleotide PPase</shortName>
    </alternativeName>
</protein>
<comment type="function">
    <text evidence="1">Nucleoside triphosphate pyrophosphatase that hydrolyzes dTTP and UTP. May have a dual role in cell division arrest and in preventing the incorporation of modified nucleotides into cellular nucleic acids.</text>
</comment>
<comment type="catalytic activity">
    <reaction evidence="1">
        <text>dTTP + H2O = dTMP + diphosphate + H(+)</text>
        <dbReference type="Rhea" id="RHEA:28534"/>
        <dbReference type="ChEBI" id="CHEBI:15377"/>
        <dbReference type="ChEBI" id="CHEBI:15378"/>
        <dbReference type="ChEBI" id="CHEBI:33019"/>
        <dbReference type="ChEBI" id="CHEBI:37568"/>
        <dbReference type="ChEBI" id="CHEBI:63528"/>
        <dbReference type="EC" id="3.6.1.9"/>
    </reaction>
</comment>
<comment type="catalytic activity">
    <reaction evidence="1">
        <text>UTP + H2O = UMP + diphosphate + H(+)</text>
        <dbReference type="Rhea" id="RHEA:29395"/>
        <dbReference type="ChEBI" id="CHEBI:15377"/>
        <dbReference type="ChEBI" id="CHEBI:15378"/>
        <dbReference type="ChEBI" id="CHEBI:33019"/>
        <dbReference type="ChEBI" id="CHEBI:46398"/>
        <dbReference type="ChEBI" id="CHEBI:57865"/>
        <dbReference type="EC" id="3.6.1.9"/>
    </reaction>
</comment>
<comment type="cofactor">
    <cofactor evidence="1">
        <name>a divalent metal cation</name>
        <dbReference type="ChEBI" id="CHEBI:60240"/>
    </cofactor>
</comment>
<comment type="subcellular location">
    <subcellularLocation>
        <location evidence="1">Cytoplasm</location>
    </subcellularLocation>
</comment>
<comment type="similarity">
    <text evidence="1">Belongs to the Maf family. YhdE subfamily.</text>
</comment>
<gene>
    <name type="primary">maf</name>
    <name type="ordered locus">BCAH187_A4588</name>
</gene>
<feature type="chain" id="PRO_1000127772" description="dTTP/UTP pyrophosphatase">
    <location>
        <begin position="1"/>
        <end position="191"/>
    </location>
</feature>
<feature type="active site" description="Proton acceptor" evidence="1">
    <location>
        <position position="69"/>
    </location>
</feature>
<feature type="site" description="Important for substrate specificity" evidence="1">
    <location>
        <position position="12"/>
    </location>
</feature>
<feature type="site" description="Important for substrate specificity" evidence="1">
    <location>
        <position position="70"/>
    </location>
</feature>
<feature type="site" description="Important for substrate specificity" evidence="1">
    <location>
        <position position="152"/>
    </location>
</feature>
<name>NTPPA_BACC7</name>
<evidence type="ECO:0000255" key="1">
    <source>
        <dbReference type="HAMAP-Rule" id="MF_00528"/>
    </source>
</evidence>